<proteinExistence type="evidence at protein level"/>
<reference key="1">
    <citation type="journal article" date="1988" name="J. Biol. Chem.">
        <title>Cloning and characterization of porcine brain cofilin cDNA. Cofilin contains the nuclear transport signal sequence.</title>
        <authorList>
            <person name="Matsuzaki F."/>
            <person name="Matsumoto S."/>
            <person name="Yahara I."/>
            <person name="Yonezawa N."/>
            <person name="Nishida E."/>
            <person name="Sakai H."/>
        </authorList>
    </citation>
    <scope>NUCLEOTIDE SEQUENCE [MRNA]</scope>
    <scope>PARTIAL PROTEIN SEQUENCE</scope>
    <source>
        <tissue>Brain</tissue>
    </source>
</reference>
<reference key="2">
    <citation type="journal article" date="1996" name="Mamm. Genome">
        <title>Evaluation and characterization of a porcine small intestine cDNA library: analysis of 839 clones.</title>
        <authorList>
            <person name="Winteroe A.K."/>
            <person name="Fredholm M."/>
            <person name="Davies W."/>
        </authorList>
    </citation>
    <scope>NUCLEOTIDE SEQUENCE [LARGE SCALE MRNA] OF 1-104</scope>
    <source>
        <tissue>Small intestine</tissue>
    </source>
</reference>
<reference key="3">
    <citation type="journal article" date="1984" name="Biochemistry">
        <title>Cofilin, a protein in porcine brain that binds to actin filaments and inhibits their interactions with myosin and tropomyosin.</title>
        <authorList>
            <person name="Nishida E."/>
            <person name="Maekawa S."/>
            <person name="Sakai H."/>
        </authorList>
    </citation>
    <scope>FUNCTION</scope>
    <scope>ACTIN-BINDING</scope>
</reference>
<reference key="4">
    <citation type="journal article" date="1996" name="Genes Cells">
        <title>Phosphorylation of Ser-3 of cofilin regulates its essential function on actin.</title>
        <authorList>
            <person name="Moriyama K."/>
            <person name="Iida K."/>
            <person name="Yahara I."/>
        </authorList>
    </citation>
    <scope>FUNCTION</scope>
    <scope>ACTIN-BINDING</scope>
    <scope>PHOSPHORYLATION AT SER-3</scope>
</reference>
<name>COF1_PIG</name>
<gene>
    <name type="primary">CFL1</name>
</gene>
<keyword id="KW-0007">Acetylation</keyword>
<keyword id="KW-0009">Actin-binding</keyword>
<keyword id="KW-1003">Cell membrane</keyword>
<keyword id="KW-0966">Cell projection</keyword>
<keyword id="KW-0963">Cytoplasm</keyword>
<keyword id="KW-0206">Cytoskeleton</keyword>
<keyword id="KW-0903">Direct protein sequencing</keyword>
<keyword id="KW-1017">Isopeptide bond</keyword>
<keyword id="KW-0472">Membrane</keyword>
<keyword id="KW-0539">Nucleus</keyword>
<keyword id="KW-0597">Phosphoprotein</keyword>
<keyword id="KW-1185">Reference proteome</keyword>
<keyword id="KW-0832">Ubl conjugation</keyword>
<accession>P10668</accession>
<accession>Q29374</accession>
<sequence length="166" mass="18519">MASGVAVSDGVIKVFNDMKVRKSSTPEEVKKRKKAVLFCLSEDKKNIILEEGKEILVGDVGQTVDDPYATFVKMLPDKDCRYALYDATYETKESKKEDLVFIFWAPECAPLKSKMIYASSKDAIKKKLTGIKHELQANCYEEVKDRCTLAEKLGGSAVISLEGKPL</sequence>
<protein>
    <recommendedName>
        <fullName>Cofilin-1</fullName>
    </recommendedName>
    <alternativeName>
        <fullName>Cofilin, non-muscle isoform</fullName>
    </alternativeName>
</protein>
<dbReference type="EMBL" id="M20866">
    <property type="protein sequence ID" value="AAA31020.1"/>
    <property type="molecule type" value="mRNA"/>
</dbReference>
<dbReference type="EMBL" id="F14577">
    <property type="protein sequence ID" value="CAA23134.1"/>
    <property type="molecule type" value="mRNA"/>
</dbReference>
<dbReference type="PIR" id="A29240">
    <property type="entry name" value="A29240"/>
</dbReference>
<dbReference type="RefSeq" id="NP_001004043.1">
    <property type="nucleotide sequence ID" value="NM_001004043.1"/>
</dbReference>
<dbReference type="BMRB" id="P10668"/>
<dbReference type="SMR" id="P10668"/>
<dbReference type="FunCoup" id="P10668">
    <property type="interactions" value="2102"/>
</dbReference>
<dbReference type="STRING" id="9823.ENSSSCP00000028248"/>
<dbReference type="iPTMnet" id="P10668"/>
<dbReference type="PaxDb" id="9823-ENSSSCP00000030314"/>
<dbReference type="PeptideAtlas" id="P10668"/>
<dbReference type="Ensembl" id="ENSSSCT00000043957.3">
    <property type="protein sequence ID" value="ENSSSCP00000031883.1"/>
    <property type="gene ID" value="ENSSSCG00000012974.6"/>
</dbReference>
<dbReference type="Ensembl" id="ENSSSCT00025107024.1">
    <property type="protein sequence ID" value="ENSSSCP00025048171.1"/>
    <property type="gene ID" value="ENSSSCG00025077099.1"/>
</dbReference>
<dbReference type="Ensembl" id="ENSSSCT00030026834.1">
    <property type="protein sequence ID" value="ENSSSCP00030011961.1"/>
    <property type="gene ID" value="ENSSSCG00030019417.1"/>
</dbReference>
<dbReference type="Ensembl" id="ENSSSCT00035096287.1">
    <property type="protein sequence ID" value="ENSSSCP00035040515.1"/>
    <property type="gene ID" value="ENSSSCG00035071147.1"/>
</dbReference>
<dbReference type="Ensembl" id="ENSSSCT00040091304.1">
    <property type="protein sequence ID" value="ENSSSCP00040040241.1"/>
    <property type="gene ID" value="ENSSSCG00040066748.1"/>
</dbReference>
<dbReference type="Ensembl" id="ENSSSCT00045044723.1">
    <property type="protein sequence ID" value="ENSSSCP00045031025.1"/>
    <property type="gene ID" value="ENSSSCG00045026140.1"/>
</dbReference>
<dbReference type="Ensembl" id="ENSSSCT00060095546.1">
    <property type="protein sequence ID" value="ENSSSCP00060041328.1"/>
    <property type="gene ID" value="ENSSSCG00060069854.1"/>
</dbReference>
<dbReference type="Ensembl" id="ENSSSCT00065057958.1">
    <property type="protein sequence ID" value="ENSSSCP00065025141.1"/>
    <property type="gene ID" value="ENSSSCG00065042384.1"/>
</dbReference>
<dbReference type="Ensembl" id="ENSSSCT00070034488.1">
    <property type="protein sequence ID" value="ENSSSCP00070028806.1"/>
    <property type="gene ID" value="ENSSSCG00070017422.1"/>
</dbReference>
<dbReference type="Ensembl" id="ENSSSCT00105078466">
    <property type="protein sequence ID" value="ENSSSCP00105055588"/>
    <property type="gene ID" value="ENSSSCG00105041127"/>
</dbReference>
<dbReference type="Ensembl" id="ENSSSCT00105078630">
    <property type="protein sequence ID" value="ENSSSCP00105055678"/>
    <property type="gene ID" value="ENSSSCG00105041226"/>
</dbReference>
<dbReference type="Ensembl" id="ENSSSCT00110057149">
    <property type="protein sequence ID" value="ENSSSCP00110039738"/>
    <property type="gene ID" value="ENSSSCG00110029912"/>
</dbReference>
<dbReference type="Ensembl" id="ENSSSCT00115039459">
    <property type="protein sequence ID" value="ENSSSCP00115037188"/>
    <property type="gene ID" value="ENSSSCG00115022292"/>
</dbReference>
<dbReference type="Ensembl" id="ENSSSCT00130075906">
    <property type="protein sequence ID" value="ENSSSCP00130054602"/>
    <property type="gene ID" value="ENSSSCG00130038965"/>
</dbReference>
<dbReference type="GeneID" id="445532"/>
<dbReference type="KEGG" id="ssc:445532"/>
<dbReference type="CTD" id="1072"/>
<dbReference type="eggNOG" id="KOG1735">
    <property type="taxonomic scope" value="Eukaryota"/>
</dbReference>
<dbReference type="GeneTree" id="ENSGT00950000183000"/>
<dbReference type="InParanoid" id="P10668"/>
<dbReference type="OMA" id="WSMIYAT"/>
<dbReference type="OrthoDB" id="10249245at2759"/>
<dbReference type="Proteomes" id="UP000008227">
    <property type="component" value="Chromosome 2"/>
</dbReference>
<dbReference type="Proteomes" id="UP000314985">
    <property type="component" value="Chromosome 2"/>
</dbReference>
<dbReference type="Proteomes" id="UP000694570">
    <property type="component" value="Unplaced"/>
</dbReference>
<dbReference type="Proteomes" id="UP000694571">
    <property type="component" value="Unplaced"/>
</dbReference>
<dbReference type="Proteomes" id="UP000694720">
    <property type="component" value="Unplaced"/>
</dbReference>
<dbReference type="Proteomes" id="UP000694722">
    <property type="component" value="Unplaced"/>
</dbReference>
<dbReference type="Proteomes" id="UP000694723">
    <property type="component" value="Unplaced"/>
</dbReference>
<dbReference type="Proteomes" id="UP000694724">
    <property type="component" value="Unplaced"/>
</dbReference>
<dbReference type="Proteomes" id="UP000694725">
    <property type="component" value="Unplaced"/>
</dbReference>
<dbReference type="Proteomes" id="UP000694726">
    <property type="component" value="Unplaced"/>
</dbReference>
<dbReference type="Proteomes" id="UP000694727">
    <property type="component" value="Unplaced"/>
</dbReference>
<dbReference type="Proteomes" id="UP000694728">
    <property type="component" value="Unplaced"/>
</dbReference>
<dbReference type="Bgee" id="ENSSSCG00000012974">
    <property type="expression patterns" value="Expressed in prefrontal cortex and 43 other cell types or tissues"/>
</dbReference>
<dbReference type="ExpressionAtlas" id="P10668">
    <property type="expression patterns" value="baseline and differential"/>
</dbReference>
<dbReference type="GO" id="GO:0015629">
    <property type="term" value="C:actin cytoskeleton"/>
    <property type="evidence" value="ECO:0000318"/>
    <property type="project" value="GO_Central"/>
</dbReference>
<dbReference type="GO" id="GO:0005737">
    <property type="term" value="C:cytoplasm"/>
    <property type="evidence" value="ECO:0000318"/>
    <property type="project" value="GO_Central"/>
</dbReference>
<dbReference type="GO" id="GO:0030426">
    <property type="term" value="C:growth cone"/>
    <property type="evidence" value="ECO:0007669"/>
    <property type="project" value="UniProtKB-SubCell"/>
</dbReference>
<dbReference type="GO" id="GO:0030027">
    <property type="term" value="C:lamellipodium"/>
    <property type="evidence" value="ECO:0000250"/>
    <property type="project" value="UniProtKB"/>
</dbReference>
<dbReference type="GO" id="GO:0031258">
    <property type="term" value="C:lamellipodium membrane"/>
    <property type="evidence" value="ECO:0007669"/>
    <property type="project" value="UniProtKB-SubCell"/>
</dbReference>
<dbReference type="GO" id="GO:0016363">
    <property type="term" value="C:nuclear matrix"/>
    <property type="evidence" value="ECO:0007669"/>
    <property type="project" value="UniProtKB-SubCell"/>
</dbReference>
<dbReference type="GO" id="GO:0032587">
    <property type="term" value="C:ruffle membrane"/>
    <property type="evidence" value="ECO:0007669"/>
    <property type="project" value="UniProtKB-SubCell"/>
</dbReference>
<dbReference type="GO" id="GO:0051015">
    <property type="term" value="F:actin filament binding"/>
    <property type="evidence" value="ECO:0000314"/>
    <property type="project" value="UniProtKB"/>
</dbReference>
<dbReference type="GO" id="GO:0030043">
    <property type="term" value="P:actin filament fragmentation"/>
    <property type="evidence" value="ECO:0000318"/>
    <property type="project" value="GO_Central"/>
</dbReference>
<dbReference type="GO" id="GO:0007015">
    <property type="term" value="P:actin filament organization"/>
    <property type="evidence" value="ECO:0000250"/>
    <property type="project" value="UniProtKB"/>
</dbReference>
<dbReference type="GO" id="GO:0051014">
    <property type="term" value="P:actin filament severing"/>
    <property type="evidence" value="ECO:0000318"/>
    <property type="project" value="GO_Central"/>
</dbReference>
<dbReference type="GO" id="GO:0007010">
    <property type="term" value="P:cytoskeleton organization"/>
    <property type="evidence" value="ECO:0000250"/>
    <property type="project" value="UniProtKB"/>
</dbReference>
<dbReference type="GO" id="GO:0051293">
    <property type="term" value="P:establishment of spindle localization"/>
    <property type="evidence" value="ECO:0000250"/>
    <property type="project" value="UniProtKB"/>
</dbReference>
<dbReference type="GO" id="GO:0000281">
    <property type="term" value="P:mitotic cytokinesis"/>
    <property type="evidence" value="ECO:0000318"/>
    <property type="project" value="GO_Central"/>
</dbReference>
<dbReference type="GO" id="GO:0040019">
    <property type="term" value="P:positive regulation of embryonic development"/>
    <property type="evidence" value="ECO:0000250"/>
    <property type="project" value="UniProtKB"/>
</dbReference>
<dbReference type="GO" id="GO:0022604">
    <property type="term" value="P:regulation of cell morphogenesis"/>
    <property type="evidence" value="ECO:0000250"/>
    <property type="project" value="UniProtKB"/>
</dbReference>
<dbReference type="CDD" id="cd11286">
    <property type="entry name" value="ADF_cofilin_like"/>
    <property type="match status" value="1"/>
</dbReference>
<dbReference type="FunFam" id="3.40.20.10:FF:000010">
    <property type="entry name" value="Putative destrin"/>
    <property type="match status" value="1"/>
</dbReference>
<dbReference type="Gene3D" id="3.40.20.10">
    <property type="entry name" value="Severin"/>
    <property type="match status" value="1"/>
</dbReference>
<dbReference type="InterPro" id="IPR002108">
    <property type="entry name" value="ADF-H"/>
</dbReference>
<dbReference type="InterPro" id="IPR029006">
    <property type="entry name" value="ADF-H/Gelsolin-like_dom_sf"/>
</dbReference>
<dbReference type="InterPro" id="IPR017904">
    <property type="entry name" value="ADF/Cofilin"/>
</dbReference>
<dbReference type="PANTHER" id="PTHR11913">
    <property type="entry name" value="COFILIN-RELATED"/>
    <property type="match status" value="1"/>
</dbReference>
<dbReference type="Pfam" id="PF00241">
    <property type="entry name" value="Cofilin_ADF"/>
    <property type="match status" value="1"/>
</dbReference>
<dbReference type="PRINTS" id="PR00006">
    <property type="entry name" value="COFILIN"/>
</dbReference>
<dbReference type="SMART" id="SM00102">
    <property type="entry name" value="ADF"/>
    <property type="match status" value="1"/>
</dbReference>
<dbReference type="SUPFAM" id="SSF55753">
    <property type="entry name" value="Actin depolymerizing proteins"/>
    <property type="match status" value="1"/>
</dbReference>
<dbReference type="PROSITE" id="PS51263">
    <property type="entry name" value="ADF_H"/>
    <property type="match status" value="1"/>
</dbReference>
<evidence type="ECO:0000250" key="1">
    <source>
        <dbReference type="UniProtKB" id="P18760"/>
    </source>
</evidence>
<evidence type="ECO:0000250" key="2">
    <source>
        <dbReference type="UniProtKB" id="P23528"/>
    </source>
</evidence>
<evidence type="ECO:0000250" key="3">
    <source>
        <dbReference type="UniProtKB" id="P45695"/>
    </source>
</evidence>
<evidence type="ECO:0000255" key="4"/>
<evidence type="ECO:0000255" key="5">
    <source>
        <dbReference type="PROSITE-ProRule" id="PRU00599"/>
    </source>
</evidence>
<evidence type="ECO:0000269" key="6">
    <source>
    </source>
</evidence>
<evidence type="ECO:0000269" key="7">
    <source>
    </source>
</evidence>
<evidence type="ECO:0000305" key="8"/>
<feature type="initiator methionine" description="Removed" evidence="2">
    <location>
        <position position="1"/>
    </location>
</feature>
<feature type="chain" id="PRO_0000214901" description="Cofilin-1">
    <location>
        <begin position="2"/>
        <end position="166"/>
    </location>
</feature>
<feature type="domain" description="ADF-H" evidence="5">
    <location>
        <begin position="4"/>
        <end position="153"/>
    </location>
</feature>
<feature type="short sequence motif" description="Nuclear localization signal" evidence="4">
    <location>
        <begin position="30"/>
        <end position="34"/>
    </location>
</feature>
<feature type="modified residue" description="N-acetylalanine" evidence="2">
    <location>
        <position position="2"/>
    </location>
</feature>
<feature type="modified residue" description="Phosphoserine" evidence="2">
    <location>
        <position position="3"/>
    </location>
</feature>
<feature type="modified residue" description="Phosphoserine" evidence="1">
    <location>
        <position position="8"/>
    </location>
</feature>
<feature type="modified residue" description="N6-acetyllysine" evidence="2">
    <location>
        <position position="13"/>
    </location>
</feature>
<feature type="modified residue" description="Phosphothreonine" evidence="2">
    <location>
        <position position="25"/>
    </location>
</feature>
<feature type="modified residue" description="Phosphoserine" evidence="2">
    <location>
        <position position="41"/>
    </location>
</feature>
<feature type="modified residue" description="Phosphotyrosine" evidence="2">
    <location>
        <position position="68"/>
    </location>
</feature>
<feature type="modified residue" description="N6-acetyllysine" evidence="2">
    <location>
        <position position="73"/>
    </location>
</feature>
<feature type="modified residue" description="Phosphotyrosine" evidence="2">
    <location>
        <position position="140"/>
    </location>
</feature>
<feature type="modified residue" description="N6-acetyllysine" evidence="2">
    <location>
        <position position="144"/>
    </location>
</feature>
<feature type="modified residue" description="Phosphoserine" evidence="2">
    <location>
        <position position="156"/>
    </location>
</feature>
<feature type="cross-link" description="Glycyl lysine isopeptide (Lys-Gly) (interchain with G-Cter in SUMO2)" evidence="2">
    <location>
        <position position="132"/>
    </location>
</feature>
<organism>
    <name type="scientific">Sus scrofa</name>
    <name type="common">Pig</name>
    <dbReference type="NCBI Taxonomy" id="9823"/>
    <lineage>
        <taxon>Eukaryota</taxon>
        <taxon>Metazoa</taxon>
        <taxon>Chordata</taxon>
        <taxon>Craniata</taxon>
        <taxon>Vertebrata</taxon>
        <taxon>Euteleostomi</taxon>
        <taxon>Mammalia</taxon>
        <taxon>Eutheria</taxon>
        <taxon>Laurasiatheria</taxon>
        <taxon>Artiodactyla</taxon>
        <taxon>Suina</taxon>
        <taxon>Suidae</taxon>
        <taxon>Sus</taxon>
    </lineage>
</organism>
<comment type="function">
    <text evidence="1 2 6 7">Binds to F-actin and exhibits pH-sensitive F-actin depolymerizing activity (PubMed:6509022, PubMed:9078368). In conjunction with the subcortical maternal complex (SCMC), plays an essential role for zygotes to progress beyond the first embryonic cell divisions via regulation of actin dynamics (PubMed:9078368). Required for the centralization of the mitotic spindle and symmetric division of zygotes (By similarity). Plays a role in the regulation of cell morphology and cytoskeletal organization in epithelial cells (By similarity). Required for the up-regulation of atypical chemokine receptor ACKR2 from endosomal compartment to cell membrane, increasing its efficiency in chemokine uptake and degradation (By similarity). Required for neural tube morphogenesis and neural crest cell migration (By similarity).</text>
</comment>
<comment type="subunit">
    <text evidence="1 6 7">Can bind G- and F-actin in a 1:1 ratio of cofilin to actin (PubMed:6509022, PubMed:9078368). It is a major component of intranuclear and cytoplasmic actin rods (PubMed:9078368). Interacts with the subcortical maternal complex (SCMC) via interaction with TLE6 and NLRP5 (By similarity). Interacts with C9orf72 (By similarity).</text>
</comment>
<comment type="subcellular location">
    <subcellularLocation>
        <location evidence="2">Nucleus matrix</location>
    </subcellularLocation>
    <subcellularLocation>
        <location evidence="2">Cytoplasm</location>
        <location evidence="2">Cytoskeleton</location>
    </subcellularLocation>
    <subcellularLocation>
        <location evidence="2">Cell projection</location>
        <location evidence="2">Ruffle membrane</location>
        <topology evidence="2">Peripheral membrane protein</topology>
        <orientation evidence="2">Cytoplasmic side</orientation>
    </subcellularLocation>
    <subcellularLocation>
        <location evidence="2">Cell projection</location>
        <location evidence="2">Lamellipodium membrane</location>
        <topology evidence="2">Peripheral membrane protein</topology>
        <orientation evidence="2">Cytoplasmic side</orientation>
    </subcellularLocation>
    <subcellularLocation>
        <location evidence="1">Cell projection</location>
        <location evidence="1">Lamellipodium</location>
    </subcellularLocation>
    <subcellularLocation>
        <location evidence="1">Cell projection</location>
        <location evidence="1">Growth cone</location>
    </subcellularLocation>
    <subcellularLocation>
        <location evidence="1">Cell projection</location>
        <location evidence="1">Axon</location>
    </subcellularLocation>
    <text evidence="2">Colocalizes with the actin cytoskeleton in membrane ruffles and lamellipodia. Detected at the cleavage furrow and contractile ring during cytokinesis. Almost completely in nucleus in cells exposed to heat shock or 10% dimethyl sulfoxide.</text>
</comment>
<comment type="tissue specificity">
    <text>Widely distributed in various tissues.</text>
</comment>
<comment type="PTM">
    <text evidence="3 7">Inactivated by phosphorylation on Ser-3 (PubMed:9078368). Phosphorylated on Ser-3 in resting cells (By similarity). Dephosphorylated by PDXP/chronophin; this restores its activity in promoting actin filament depolymerization. The phosphorylation of Ser-24 may prevent recognition of the nuclear localization signal (By similarity). Phosphorylated via a ARRB1-RAC1-LIMK1-PAK1 cascade upon active ligand stimulation of atypical chemokine receptor ACKR2 (By similarity).</text>
</comment>
<comment type="similarity">
    <text evidence="8">Belongs to the actin-binding proteins ADF family.</text>
</comment>